<name>RL6_STACT</name>
<gene>
    <name evidence="1" type="primary">rplF</name>
    <name type="ordered locus">Sca_1720</name>
</gene>
<sequence length="178" mass="19610">MSRVGKKIIEIPSDVTVDIKGNVITVKGPKGELTRTFDDSMSYKLEDNTLEVVRPSDSQKDRTVHGTTRALINNMVQGVSKGFEKTLELIGVGYRAQLQGSNLVLNVGYSHPVEFKPEDGITFTVEKNTTVKVEGISKELVGATASNIRAVRPPEPYKGKGIRYQGEYVRRKEGKTGK</sequence>
<comment type="function">
    <text evidence="1">This protein binds to the 23S rRNA, and is important in its secondary structure. It is located near the subunit interface in the base of the L7/L12 stalk, and near the tRNA binding site of the peptidyltransferase center.</text>
</comment>
<comment type="subunit">
    <text evidence="1">Part of the 50S ribosomal subunit.</text>
</comment>
<comment type="similarity">
    <text evidence="1">Belongs to the universal ribosomal protein uL6 family.</text>
</comment>
<dbReference type="EMBL" id="AM295250">
    <property type="protein sequence ID" value="CAL28626.1"/>
    <property type="molecule type" value="Genomic_DNA"/>
</dbReference>
<dbReference type="RefSeq" id="WP_015900964.1">
    <property type="nucleotide sequence ID" value="NC_012121.1"/>
</dbReference>
<dbReference type="SMR" id="B9DM32"/>
<dbReference type="GeneID" id="93794179"/>
<dbReference type="KEGG" id="sca:SCA_1720"/>
<dbReference type="eggNOG" id="COG0097">
    <property type="taxonomic scope" value="Bacteria"/>
</dbReference>
<dbReference type="HOGENOM" id="CLU_065464_1_2_9"/>
<dbReference type="OrthoDB" id="9805007at2"/>
<dbReference type="BioCyc" id="SCAR396513:SCA_RS08765-MONOMER"/>
<dbReference type="Proteomes" id="UP000000444">
    <property type="component" value="Chromosome"/>
</dbReference>
<dbReference type="GO" id="GO:0022625">
    <property type="term" value="C:cytosolic large ribosomal subunit"/>
    <property type="evidence" value="ECO:0007669"/>
    <property type="project" value="TreeGrafter"/>
</dbReference>
<dbReference type="GO" id="GO:0019843">
    <property type="term" value="F:rRNA binding"/>
    <property type="evidence" value="ECO:0007669"/>
    <property type="project" value="UniProtKB-UniRule"/>
</dbReference>
<dbReference type="GO" id="GO:0003735">
    <property type="term" value="F:structural constituent of ribosome"/>
    <property type="evidence" value="ECO:0007669"/>
    <property type="project" value="InterPro"/>
</dbReference>
<dbReference type="GO" id="GO:0002181">
    <property type="term" value="P:cytoplasmic translation"/>
    <property type="evidence" value="ECO:0007669"/>
    <property type="project" value="TreeGrafter"/>
</dbReference>
<dbReference type="FunFam" id="3.90.930.12:FF:000001">
    <property type="entry name" value="50S ribosomal protein L6"/>
    <property type="match status" value="1"/>
</dbReference>
<dbReference type="FunFam" id="3.90.930.12:FF:000002">
    <property type="entry name" value="50S ribosomal protein L6"/>
    <property type="match status" value="1"/>
</dbReference>
<dbReference type="Gene3D" id="3.90.930.12">
    <property type="entry name" value="Ribosomal protein L6, alpha-beta domain"/>
    <property type="match status" value="2"/>
</dbReference>
<dbReference type="HAMAP" id="MF_01365_B">
    <property type="entry name" value="Ribosomal_uL6_B"/>
    <property type="match status" value="1"/>
</dbReference>
<dbReference type="InterPro" id="IPR000702">
    <property type="entry name" value="Ribosomal_uL6-like"/>
</dbReference>
<dbReference type="InterPro" id="IPR036789">
    <property type="entry name" value="Ribosomal_uL6-like_a/b-dom_sf"/>
</dbReference>
<dbReference type="InterPro" id="IPR020040">
    <property type="entry name" value="Ribosomal_uL6_a/b-dom"/>
</dbReference>
<dbReference type="InterPro" id="IPR019906">
    <property type="entry name" value="Ribosomal_uL6_bac-type"/>
</dbReference>
<dbReference type="InterPro" id="IPR002358">
    <property type="entry name" value="Ribosomal_uL6_CS"/>
</dbReference>
<dbReference type="NCBIfam" id="TIGR03654">
    <property type="entry name" value="L6_bact"/>
    <property type="match status" value="1"/>
</dbReference>
<dbReference type="PANTHER" id="PTHR11655">
    <property type="entry name" value="60S/50S RIBOSOMAL PROTEIN L6/L9"/>
    <property type="match status" value="1"/>
</dbReference>
<dbReference type="PANTHER" id="PTHR11655:SF14">
    <property type="entry name" value="LARGE RIBOSOMAL SUBUNIT PROTEIN UL6M"/>
    <property type="match status" value="1"/>
</dbReference>
<dbReference type="Pfam" id="PF00347">
    <property type="entry name" value="Ribosomal_L6"/>
    <property type="match status" value="2"/>
</dbReference>
<dbReference type="PIRSF" id="PIRSF002162">
    <property type="entry name" value="Ribosomal_L6"/>
    <property type="match status" value="1"/>
</dbReference>
<dbReference type="PRINTS" id="PR00059">
    <property type="entry name" value="RIBOSOMALL6"/>
</dbReference>
<dbReference type="SUPFAM" id="SSF56053">
    <property type="entry name" value="Ribosomal protein L6"/>
    <property type="match status" value="2"/>
</dbReference>
<dbReference type="PROSITE" id="PS00525">
    <property type="entry name" value="RIBOSOMAL_L6_1"/>
    <property type="match status" value="1"/>
</dbReference>
<reference key="1">
    <citation type="journal article" date="2009" name="Appl. Environ. Microbiol.">
        <title>Genome analysis of the meat starter culture bacterium Staphylococcus carnosus TM300.</title>
        <authorList>
            <person name="Rosenstein R."/>
            <person name="Nerz C."/>
            <person name="Biswas L."/>
            <person name="Resch A."/>
            <person name="Raddatz G."/>
            <person name="Schuster S.C."/>
            <person name="Goetz F."/>
        </authorList>
    </citation>
    <scope>NUCLEOTIDE SEQUENCE [LARGE SCALE GENOMIC DNA]</scope>
    <source>
        <strain>TM300</strain>
    </source>
</reference>
<keyword id="KW-1185">Reference proteome</keyword>
<keyword id="KW-0687">Ribonucleoprotein</keyword>
<keyword id="KW-0689">Ribosomal protein</keyword>
<keyword id="KW-0694">RNA-binding</keyword>
<keyword id="KW-0699">rRNA-binding</keyword>
<organism>
    <name type="scientific">Staphylococcus carnosus (strain TM300)</name>
    <dbReference type="NCBI Taxonomy" id="396513"/>
    <lineage>
        <taxon>Bacteria</taxon>
        <taxon>Bacillati</taxon>
        <taxon>Bacillota</taxon>
        <taxon>Bacilli</taxon>
        <taxon>Bacillales</taxon>
        <taxon>Staphylococcaceae</taxon>
        <taxon>Staphylococcus</taxon>
    </lineage>
</organism>
<feature type="chain" id="PRO_1000166829" description="Large ribosomal subunit protein uL6">
    <location>
        <begin position="1"/>
        <end position="178"/>
    </location>
</feature>
<evidence type="ECO:0000255" key="1">
    <source>
        <dbReference type="HAMAP-Rule" id="MF_01365"/>
    </source>
</evidence>
<evidence type="ECO:0000305" key="2"/>
<proteinExistence type="inferred from homology"/>
<accession>B9DM32</accession>
<protein>
    <recommendedName>
        <fullName evidence="1">Large ribosomal subunit protein uL6</fullName>
    </recommendedName>
    <alternativeName>
        <fullName evidence="2">50S ribosomal protein L6</fullName>
    </alternativeName>
</protein>